<name>RS21C_BURMA</name>
<accession>Q62CJ3</accession>
<reference key="1">
    <citation type="journal article" date="2004" name="Proc. Natl. Acad. Sci. U.S.A.">
        <title>Structural flexibility in the Burkholderia mallei genome.</title>
        <authorList>
            <person name="Nierman W.C."/>
            <person name="DeShazer D."/>
            <person name="Kim H.S."/>
            <person name="Tettelin H."/>
            <person name="Nelson K.E."/>
            <person name="Feldblyum T.V."/>
            <person name="Ulrich R.L."/>
            <person name="Ronning C.M."/>
            <person name="Brinkac L.M."/>
            <person name="Daugherty S.C."/>
            <person name="Davidsen T.D."/>
            <person name="DeBoy R.T."/>
            <person name="Dimitrov G."/>
            <person name="Dodson R.J."/>
            <person name="Durkin A.S."/>
            <person name="Gwinn M.L."/>
            <person name="Haft D.H."/>
            <person name="Khouri H.M."/>
            <person name="Kolonay J.F."/>
            <person name="Madupu R."/>
            <person name="Mohammoud Y."/>
            <person name="Nelson W.C."/>
            <person name="Radune D."/>
            <person name="Romero C.M."/>
            <person name="Sarria S."/>
            <person name="Selengut J."/>
            <person name="Shamblin C."/>
            <person name="Sullivan S.A."/>
            <person name="White O."/>
            <person name="Yu Y."/>
            <person name="Zafar N."/>
            <person name="Zhou L."/>
            <person name="Fraser C.M."/>
        </authorList>
    </citation>
    <scope>NUCLEOTIDE SEQUENCE [LARGE SCALE GENOMIC DNA]</scope>
    <source>
        <strain>ATCC 23344</strain>
    </source>
</reference>
<proteinExistence type="inferred from homology"/>
<feature type="chain" id="PRO_0000178317" description="Small ribosomal subunit protein bS21C">
    <location>
        <begin position="1"/>
        <end position="70"/>
    </location>
</feature>
<feature type="region of interest" description="Disordered" evidence="2">
    <location>
        <begin position="37"/>
        <end position="70"/>
    </location>
</feature>
<feature type="compositionally biased region" description="Basic residues" evidence="2">
    <location>
        <begin position="45"/>
        <end position="70"/>
    </location>
</feature>
<dbReference type="EMBL" id="CP000011">
    <property type="protein sequence ID" value="AAU46725.1"/>
    <property type="molecule type" value="Genomic_DNA"/>
</dbReference>
<dbReference type="RefSeq" id="YP_105585.1">
    <property type="nucleotide sequence ID" value="NC_006349.2"/>
</dbReference>
<dbReference type="SMR" id="Q62CJ3"/>
<dbReference type="KEGG" id="bma:BMAA0896"/>
<dbReference type="PATRIC" id="fig|243160.12.peg.4416"/>
<dbReference type="eggNOG" id="COG0828">
    <property type="taxonomic scope" value="Bacteria"/>
</dbReference>
<dbReference type="HOGENOM" id="CLU_159258_1_1_4"/>
<dbReference type="Proteomes" id="UP000006693">
    <property type="component" value="Chromosome 2"/>
</dbReference>
<dbReference type="GO" id="GO:1990904">
    <property type="term" value="C:ribonucleoprotein complex"/>
    <property type="evidence" value="ECO:0007669"/>
    <property type="project" value="UniProtKB-KW"/>
</dbReference>
<dbReference type="GO" id="GO:0005840">
    <property type="term" value="C:ribosome"/>
    <property type="evidence" value="ECO:0007669"/>
    <property type="project" value="UniProtKB-KW"/>
</dbReference>
<dbReference type="GO" id="GO:0003735">
    <property type="term" value="F:structural constituent of ribosome"/>
    <property type="evidence" value="ECO:0007669"/>
    <property type="project" value="InterPro"/>
</dbReference>
<dbReference type="GO" id="GO:0006412">
    <property type="term" value="P:translation"/>
    <property type="evidence" value="ECO:0007669"/>
    <property type="project" value="UniProtKB-UniRule"/>
</dbReference>
<dbReference type="Gene3D" id="1.20.5.1150">
    <property type="entry name" value="Ribosomal protein S8"/>
    <property type="match status" value="1"/>
</dbReference>
<dbReference type="HAMAP" id="MF_00358">
    <property type="entry name" value="Ribosomal_bS21"/>
    <property type="match status" value="1"/>
</dbReference>
<dbReference type="InterPro" id="IPR001911">
    <property type="entry name" value="Ribosomal_bS21"/>
</dbReference>
<dbReference type="InterPro" id="IPR038380">
    <property type="entry name" value="Ribosomal_bS21_sf"/>
</dbReference>
<dbReference type="NCBIfam" id="TIGR00030">
    <property type="entry name" value="S21p"/>
    <property type="match status" value="1"/>
</dbReference>
<dbReference type="PANTHER" id="PTHR21109">
    <property type="entry name" value="MITOCHONDRIAL 28S RIBOSOMAL PROTEIN S21"/>
    <property type="match status" value="1"/>
</dbReference>
<dbReference type="PANTHER" id="PTHR21109:SF22">
    <property type="entry name" value="SMALL RIBOSOMAL SUBUNIT PROTEIN BS21"/>
    <property type="match status" value="1"/>
</dbReference>
<dbReference type="Pfam" id="PF01165">
    <property type="entry name" value="Ribosomal_S21"/>
    <property type="match status" value="1"/>
</dbReference>
<dbReference type="PRINTS" id="PR00976">
    <property type="entry name" value="RIBOSOMALS21"/>
</dbReference>
<sequence>MTTIVLNPNEPVEVALRRFRRSIERTGLIKELRARTSYEKPTTERKRKKAAAVARLRKQVRRSMPPKKKY</sequence>
<protein>
    <recommendedName>
        <fullName evidence="1">Small ribosomal subunit protein bS21C</fullName>
    </recommendedName>
    <alternativeName>
        <fullName evidence="3">30S ribosomal protein S21 3</fullName>
    </alternativeName>
</protein>
<comment type="similarity">
    <text evidence="1">Belongs to the bacterial ribosomal protein bS21 family.</text>
</comment>
<evidence type="ECO:0000255" key="1">
    <source>
        <dbReference type="HAMAP-Rule" id="MF_00358"/>
    </source>
</evidence>
<evidence type="ECO:0000256" key="2">
    <source>
        <dbReference type="SAM" id="MobiDB-lite"/>
    </source>
</evidence>
<evidence type="ECO:0000305" key="3"/>
<organism>
    <name type="scientific">Burkholderia mallei (strain ATCC 23344)</name>
    <dbReference type="NCBI Taxonomy" id="243160"/>
    <lineage>
        <taxon>Bacteria</taxon>
        <taxon>Pseudomonadati</taxon>
        <taxon>Pseudomonadota</taxon>
        <taxon>Betaproteobacteria</taxon>
        <taxon>Burkholderiales</taxon>
        <taxon>Burkholderiaceae</taxon>
        <taxon>Burkholderia</taxon>
        <taxon>pseudomallei group</taxon>
    </lineage>
</organism>
<keyword id="KW-1185">Reference proteome</keyword>
<keyword id="KW-0687">Ribonucleoprotein</keyword>
<keyword id="KW-0689">Ribosomal protein</keyword>
<gene>
    <name evidence="1" type="primary">rpsU3</name>
    <name type="synonym">rpsU-3</name>
    <name type="ordered locus">BMAA0896</name>
</gene>